<protein>
    <recommendedName>
        <fullName evidence="1">Protoheme IX farnesyltransferase</fullName>
        <ecNumber evidence="1">2.5.1.141</ecNumber>
    </recommendedName>
    <alternativeName>
        <fullName evidence="1">Heme B farnesyltransferase</fullName>
    </alternativeName>
    <alternativeName>
        <fullName evidence="1">Heme O synthase</fullName>
    </alternativeName>
</protein>
<evidence type="ECO:0000255" key="1">
    <source>
        <dbReference type="HAMAP-Rule" id="MF_00154"/>
    </source>
</evidence>
<evidence type="ECO:0000305" key="2"/>
<keyword id="KW-0997">Cell inner membrane</keyword>
<keyword id="KW-1003">Cell membrane</keyword>
<keyword id="KW-0350">Heme biosynthesis</keyword>
<keyword id="KW-0472">Membrane</keyword>
<keyword id="KW-0808">Transferase</keyword>
<keyword id="KW-0812">Transmembrane</keyword>
<keyword id="KW-1133">Transmembrane helix</keyword>
<gene>
    <name evidence="1" type="primary">ctaB</name>
    <name type="ordered locus">LBF_2606</name>
</gene>
<sequence>MFRLWNQLTKPRVTVLVLATVLPGMYLGTTGYPSLTVISITLFGTYLMSSASFILNQYIERERDAVMYRTKQRPIPAGEISPTFALLLGIVVAIVSFGILTYFINLLTAVCALAALLLYVFLYTIWLKPRTEQNIVIGGISGCIGPLIGYAAMANALPMQAWVMFLMIFLWTPAHFWALAIFLKDDYEFAGIPMMPVVSGIEKTVNQIFLYAIAYSLSVIGFYFVDDRMGYLFLLSAIVLTVLILGFAYRLKLSMDKVLAKRFFFFSILHLFLVSIAIVIDSKI</sequence>
<proteinExistence type="inferred from homology"/>
<name>COXX_LEPBA</name>
<organism>
    <name type="scientific">Leptospira biflexa serovar Patoc (strain Patoc 1 / Ames)</name>
    <dbReference type="NCBI Taxonomy" id="355278"/>
    <lineage>
        <taxon>Bacteria</taxon>
        <taxon>Pseudomonadati</taxon>
        <taxon>Spirochaetota</taxon>
        <taxon>Spirochaetia</taxon>
        <taxon>Leptospirales</taxon>
        <taxon>Leptospiraceae</taxon>
        <taxon>Leptospira</taxon>
    </lineage>
</organism>
<accession>B0SE58</accession>
<dbReference type="EC" id="2.5.1.141" evidence="1"/>
<dbReference type="EMBL" id="CP000777">
    <property type="protein sequence ID" value="ABZ95089.1"/>
    <property type="status" value="ALT_INIT"/>
    <property type="molecule type" value="Genomic_DNA"/>
</dbReference>
<dbReference type="RefSeq" id="WP_041769886.1">
    <property type="nucleotide sequence ID" value="NC_010842.1"/>
</dbReference>
<dbReference type="SMR" id="B0SE58"/>
<dbReference type="KEGG" id="lbf:LBF_2606"/>
<dbReference type="HOGENOM" id="CLU_029631_0_2_12"/>
<dbReference type="UniPathway" id="UPA00834">
    <property type="reaction ID" value="UER00712"/>
</dbReference>
<dbReference type="GO" id="GO:0005886">
    <property type="term" value="C:plasma membrane"/>
    <property type="evidence" value="ECO:0007669"/>
    <property type="project" value="UniProtKB-SubCell"/>
</dbReference>
<dbReference type="GO" id="GO:0008495">
    <property type="term" value="F:protoheme IX farnesyltransferase activity"/>
    <property type="evidence" value="ECO:0007669"/>
    <property type="project" value="UniProtKB-UniRule"/>
</dbReference>
<dbReference type="GO" id="GO:0048034">
    <property type="term" value="P:heme O biosynthetic process"/>
    <property type="evidence" value="ECO:0007669"/>
    <property type="project" value="UniProtKB-UniRule"/>
</dbReference>
<dbReference type="CDD" id="cd13957">
    <property type="entry name" value="PT_UbiA_Cox10"/>
    <property type="match status" value="1"/>
</dbReference>
<dbReference type="FunFam" id="1.10.357.140:FF:000006">
    <property type="entry name" value="Protoheme IX farnesyltransferase, mitochondrial"/>
    <property type="match status" value="1"/>
</dbReference>
<dbReference type="Gene3D" id="1.10.357.140">
    <property type="entry name" value="UbiA prenyltransferase"/>
    <property type="match status" value="1"/>
</dbReference>
<dbReference type="HAMAP" id="MF_00154">
    <property type="entry name" value="CyoE_CtaB"/>
    <property type="match status" value="1"/>
</dbReference>
<dbReference type="InterPro" id="IPR006369">
    <property type="entry name" value="Protohaem_IX_farnesylTrfase"/>
</dbReference>
<dbReference type="InterPro" id="IPR000537">
    <property type="entry name" value="UbiA_prenyltransferase"/>
</dbReference>
<dbReference type="InterPro" id="IPR044878">
    <property type="entry name" value="UbiA_sf"/>
</dbReference>
<dbReference type="NCBIfam" id="TIGR01473">
    <property type="entry name" value="cyoE_ctaB"/>
    <property type="match status" value="1"/>
</dbReference>
<dbReference type="NCBIfam" id="NF003349">
    <property type="entry name" value="PRK04375.1-2"/>
    <property type="match status" value="1"/>
</dbReference>
<dbReference type="PANTHER" id="PTHR43448:SF7">
    <property type="entry name" value="4-HYDROXYBENZOATE SOLANESYLTRANSFERASE"/>
    <property type="match status" value="1"/>
</dbReference>
<dbReference type="PANTHER" id="PTHR43448">
    <property type="entry name" value="PROTOHEME IX FARNESYLTRANSFERASE, MITOCHONDRIAL"/>
    <property type="match status" value="1"/>
</dbReference>
<dbReference type="Pfam" id="PF01040">
    <property type="entry name" value="UbiA"/>
    <property type="match status" value="1"/>
</dbReference>
<feature type="chain" id="PRO_0000346052" description="Protoheme IX farnesyltransferase">
    <location>
        <begin position="1"/>
        <end position="284"/>
    </location>
</feature>
<feature type="transmembrane region" description="Helical" evidence="1">
    <location>
        <begin position="13"/>
        <end position="33"/>
    </location>
</feature>
<feature type="transmembrane region" description="Helical" evidence="1">
    <location>
        <begin position="35"/>
        <end position="55"/>
    </location>
</feature>
<feature type="transmembrane region" description="Helical" evidence="1">
    <location>
        <begin position="84"/>
        <end position="104"/>
    </location>
</feature>
<feature type="transmembrane region" description="Helical" evidence="1">
    <location>
        <begin position="106"/>
        <end position="126"/>
    </location>
</feature>
<feature type="transmembrane region" description="Helical" evidence="1">
    <location>
        <begin position="134"/>
        <end position="154"/>
    </location>
</feature>
<feature type="transmembrane region" description="Helical" evidence="1">
    <location>
        <begin position="163"/>
        <end position="183"/>
    </location>
</feature>
<feature type="transmembrane region" description="Helical" evidence="1">
    <location>
        <begin position="205"/>
        <end position="225"/>
    </location>
</feature>
<feature type="transmembrane region" description="Helical" evidence="1">
    <location>
        <begin position="229"/>
        <end position="249"/>
    </location>
</feature>
<feature type="transmembrane region" description="Helical" evidence="1">
    <location>
        <begin position="264"/>
        <end position="284"/>
    </location>
</feature>
<comment type="function">
    <text evidence="1">Converts heme B (protoheme IX) to heme O by substitution of the vinyl group on carbon 2 of heme B porphyrin ring with a hydroxyethyl farnesyl side group.</text>
</comment>
<comment type="catalytic activity">
    <reaction evidence="1">
        <text>heme b + (2E,6E)-farnesyl diphosphate + H2O = Fe(II)-heme o + diphosphate</text>
        <dbReference type="Rhea" id="RHEA:28070"/>
        <dbReference type="ChEBI" id="CHEBI:15377"/>
        <dbReference type="ChEBI" id="CHEBI:33019"/>
        <dbReference type="ChEBI" id="CHEBI:60344"/>
        <dbReference type="ChEBI" id="CHEBI:60530"/>
        <dbReference type="ChEBI" id="CHEBI:175763"/>
        <dbReference type="EC" id="2.5.1.141"/>
    </reaction>
</comment>
<comment type="pathway">
    <text evidence="1">Porphyrin-containing compound metabolism; heme O biosynthesis; heme O from protoheme: step 1/1.</text>
</comment>
<comment type="subcellular location">
    <subcellularLocation>
        <location evidence="1">Cell inner membrane</location>
        <topology evidence="1">Multi-pass membrane protein</topology>
    </subcellularLocation>
</comment>
<comment type="miscellaneous">
    <text evidence="1">Carbon 2 of the heme B porphyrin ring is defined according to the Fischer nomenclature.</text>
</comment>
<comment type="similarity">
    <text evidence="1">Belongs to the UbiA prenyltransferase family. Protoheme IX farnesyltransferase subfamily.</text>
</comment>
<comment type="sequence caution" evidence="2">
    <conflict type="erroneous initiation">
        <sequence resource="EMBL-CDS" id="ABZ95089"/>
    </conflict>
</comment>
<reference key="1">
    <citation type="journal article" date="2008" name="PLoS ONE">
        <title>Genome sequence of the saprophyte Leptospira biflexa provides insights into the evolution of Leptospira and the pathogenesis of leptospirosis.</title>
        <authorList>
            <person name="Picardeau M."/>
            <person name="Bulach D.M."/>
            <person name="Bouchier C."/>
            <person name="Zuerner R.L."/>
            <person name="Zidane N."/>
            <person name="Wilson P.J."/>
            <person name="Creno S."/>
            <person name="Kuczek E.S."/>
            <person name="Bommezzadri S."/>
            <person name="Davis J.C."/>
            <person name="McGrath A."/>
            <person name="Johnson M.J."/>
            <person name="Boursaux-Eude C."/>
            <person name="Seemann T."/>
            <person name="Rouy Z."/>
            <person name="Coppel R.L."/>
            <person name="Rood J.I."/>
            <person name="Lajus A."/>
            <person name="Davies J.K."/>
            <person name="Medigue C."/>
            <person name="Adler B."/>
        </authorList>
    </citation>
    <scope>NUCLEOTIDE SEQUENCE [LARGE SCALE GENOMIC DNA]</scope>
    <source>
        <strain>Patoc 1 / Ames</strain>
    </source>
</reference>